<reference key="1">
    <citation type="journal article" date="2002" name="Proc. Natl. Acad. Sci. U.S.A.">
        <title>Rice phosphate transporters include an evolutionarily divergent gene specifically activated in arbuscular mycorrhizal symbiosis.</title>
        <authorList>
            <person name="Paszkowski U."/>
            <person name="Kroken S."/>
            <person name="Roux C."/>
            <person name="Briggs S.P."/>
        </authorList>
    </citation>
    <scope>NUCLEOTIDE SEQUENCE [GENOMIC DNA]</scope>
    <scope>TISSUE SPECIFICITY</scope>
</reference>
<reference key="2">
    <citation type="submission" date="2004-03" db="EMBL/GenBank/DDBJ databases">
        <title>Regulation of rice phosphate transporter gene expression by phosphate availability.</title>
        <authorList>
            <person name="Baek S.-H."/>
            <person name="Kim H.-S."/>
            <person name="Yun S.J."/>
        </authorList>
    </citation>
    <scope>NUCLEOTIDE SEQUENCE [MRNA]</scope>
    <source>
        <strain>cv. Dongjin</strain>
    </source>
</reference>
<reference key="3">
    <citation type="journal article" date="2002" name="Nature">
        <title>Sequence and analysis of rice chromosome 4.</title>
        <authorList>
            <person name="Feng Q."/>
            <person name="Zhang Y."/>
            <person name="Hao P."/>
            <person name="Wang S."/>
            <person name="Fu G."/>
            <person name="Huang Y."/>
            <person name="Li Y."/>
            <person name="Zhu J."/>
            <person name="Liu Y."/>
            <person name="Hu X."/>
            <person name="Jia P."/>
            <person name="Zhang Y."/>
            <person name="Zhao Q."/>
            <person name="Ying K."/>
            <person name="Yu S."/>
            <person name="Tang Y."/>
            <person name="Weng Q."/>
            <person name="Zhang L."/>
            <person name="Lu Y."/>
            <person name="Mu J."/>
            <person name="Lu Y."/>
            <person name="Zhang L.S."/>
            <person name="Yu Z."/>
            <person name="Fan D."/>
            <person name="Liu X."/>
            <person name="Lu T."/>
            <person name="Li C."/>
            <person name="Wu Y."/>
            <person name="Sun T."/>
            <person name="Lei H."/>
            <person name="Li T."/>
            <person name="Hu H."/>
            <person name="Guan J."/>
            <person name="Wu M."/>
            <person name="Zhang R."/>
            <person name="Zhou B."/>
            <person name="Chen Z."/>
            <person name="Chen L."/>
            <person name="Jin Z."/>
            <person name="Wang R."/>
            <person name="Yin H."/>
            <person name="Cai Z."/>
            <person name="Ren S."/>
            <person name="Lv G."/>
            <person name="Gu W."/>
            <person name="Zhu G."/>
            <person name="Tu Y."/>
            <person name="Jia J."/>
            <person name="Zhang Y."/>
            <person name="Chen J."/>
            <person name="Kang H."/>
            <person name="Chen X."/>
            <person name="Shao C."/>
            <person name="Sun Y."/>
            <person name="Hu Q."/>
            <person name="Zhang X."/>
            <person name="Zhang W."/>
            <person name="Wang L."/>
            <person name="Ding C."/>
            <person name="Sheng H."/>
            <person name="Gu J."/>
            <person name="Chen S."/>
            <person name="Ni L."/>
            <person name="Zhu F."/>
            <person name="Chen W."/>
            <person name="Lan L."/>
            <person name="Lai Y."/>
            <person name="Cheng Z."/>
            <person name="Gu M."/>
            <person name="Jiang J."/>
            <person name="Li J."/>
            <person name="Hong G."/>
            <person name="Xue Y."/>
            <person name="Han B."/>
        </authorList>
    </citation>
    <scope>NUCLEOTIDE SEQUENCE [LARGE SCALE GENOMIC DNA]</scope>
    <source>
        <strain>cv. Nipponbare</strain>
    </source>
</reference>
<reference key="4">
    <citation type="journal article" date="2005" name="Nature">
        <title>The map-based sequence of the rice genome.</title>
        <authorList>
            <consortium name="International rice genome sequencing project (IRGSP)"/>
        </authorList>
    </citation>
    <scope>NUCLEOTIDE SEQUENCE [LARGE SCALE GENOMIC DNA]</scope>
    <source>
        <strain>cv. Nipponbare</strain>
    </source>
</reference>
<reference key="5">
    <citation type="journal article" date="2008" name="Nucleic Acids Res.">
        <title>The rice annotation project database (RAP-DB): 2008 update.</title>
        <authorList>
            <consortium name="The rice annotation project (RAP)"/>
        </authorList>
    </citation>
    <scope>GENOME REANNOTATION</scope>
    <source>
        <strain>cv. Nipponbare</strain>
    </source>
</reference>
<reference key="6">
    <citation type="journal article" date="2013" name="Rice">
        <title>Improvement of the Oryza sativa Nipponbare reference genome using next generation sequence and optical map data.</title>
        <authorList>
            <person name="Kawahara Y."/>
            <person name="de la Bastide M."/>
            <person name="Hamilton J.P."/>
            <person name="Kanamori H."/>
            <person name="McCombie W.R."/>
            <person name="Ouyang S."/>
            <person name="Schwartz D.C."/>
            <person name="Tanaka T."/>
            <person name="Wu J."/>
            <person name="Zhou S."/>
            <person name="Childs K.L."/>
            <person name="Davidson R.M."/>
            <person name="Lin H."/>
            <person name="Quesada-Ocampo L."/>
            <person name="Vaillancourt B."/>
            <person name="Sakai H."/>
            <person name="Lee S.S."/>
            <person name="Kim J."/>
            <person name="Numa H."/>
            <person name="Itoh T."/>
            <person name="Buell C.R."/>
            <person name="Matsumoto T."/>
        </authorList>
    </citation>
    <scope>GENOME REANNOTATION</scope>
    <source>
        <strain>cv. Nipponbare</strain>
    </source>
</reference>
<reference key="7">
    <citation type="journal article" date="2005" name="PLoS Biol.">
        <title>The genomes of Oryza sativa: a history of duplications.</title>
        <authorList>
            <person name="Yu J."/>
            <person name="Wang J."/>
            <person name="Lin W."/>
            <person name="Li S."/>
            <person name="Li H."/>
            <person name="Zhou J."/>
            <person name="Ni P."/>
            <person name="Dong W."/>
            <person name="Hu S."/>
            <person name="Zeng C."/>
            <person name="Zhang J."/>
            <person name="Zhang Y."/>
            <person name="Li R."/>
            <person name="Xu Z."/>
            <person name="Li S."/>
            <person name="Li X."/>
            <person name="Zheng H."/>
            <person name="Cong L."/>
            <person name="Lin L."/>
            <person name="Yin J."/>
            <person name="Geng J."/>
            <person name="Li G."/>
            <person name="Shi J."/>
            <person name="Liu J."/>
            <person name="Lv H."/>
            <person name="Li J."/>
            <person name="Wang J."/>
            <person name="Deng Y."/>
            <person name="Ran L."/>
            <person name="Shi X."/>
            <person name="Wang X."/>
            <person name="Wu Q."/>
            <person name="Li C."/>
            <person name="Ren X."/>
            <person name="Wang J."/>
            <person name="Wang X."/>
            <person name="Li D."/>
            <person name="Liu D."/>
            <person name="Zhang X."/>
            <person name="Ji Z."/>
            <person name="Zhao W."/>
            <person name="Sun Y."/>
            <person name="Zhang Z."/>
            <person name="Bao J."/>
            <person name="Han Y."/>
            <person name="Dong L."/>
            <person name="Ji J."/>
            <person name="Chen P."/>
            <person name="Wu S."/>
            <person name="Liu J."/>
            <person name="Xiao Y."/>
            <person name="Bu D."/>
            <person name="Tan J."/>
            <person name="Yang L."/>
            <person name="Ye C."/>
            <person name="Zhang J."/>
            <person name="Xu J."/>
            <person name="Zhou Y."/>
            <person name="Yu Y."/>
            <person name="Zhang B."/>
            <person name="Zhuang S."/>
            <person name="Wei H."/>
            <person name="Liu B."/>
            <person name="Lei M."/>
            <person name="Yu H."/>
            <person name="Li Y."/>
            <person name="Xu H."/>
            <person name="Wei S."/>
            <person name="He X."/>
            <person name="Fang L."/>
            <person name="Zhang Z."/>
            <person name="Zhang Y."/>
            <person name="Huang X."/>
            <person name="Su Z."/>
            <person name="Tong W."/>
            <person name="Li J."/>
            <person name="Tong Z."/>
            <person name="Li S."/>
            <person name="Ye J."/>
            <person name="Wang L."/>
            <person name="Fang L."/>
            <person name="Lei T."/>
            <person name="Chen C.-S."/>
            <person name="Chen H.-C."/>
            <person name="Xu Z."/>
            <person name="Li H."/>
            <person name="Huang H."/>
            <person name="Zhang F."/>
            <person name="Xu H."/>
            <person name="Li N."/>
            <person name="Zhao C."/>
            <person name="Li S."/>
            <person name="Dong L."/>
            <person name="Huang Y."/>
            <person name="Li L."/>
            <person name="Xi Y."/>
            <person name="Qi Q."/>
            <person name="Li W."/>
            <person name="Zhang B."/>
            <person name="Hu W."/>
            <person name="Zhang Y."/>
            <person name="Tian X."/>
            <person name="Jiao Y."/>
            <person name="Liang X."/>
            <person name="Jin J."/>
            <person name="Gao L."/>
            <person name="Zheng W."/>
            <person name="Hao B."/>
            <person name="Liu S.-M."/>
            <person name="Wang W."/>
            <person name="Yuan L."/>
            <person name="Cao M."/>
            <person name="McDermott J."/>
            <person name="Samudrala R."/>
            <person name="Wang J."/>
            <person name="Wong G.K.-S."/>
            <person name="Yang H."/>
        </authorList>
    </citation>
    <scope>NUCLEOTIDE SEQUENCE [LARGE SCALE GENOMIC DNA]</scope>
    <source>
        <strain>cv. Nipponbare</strain>
    </source>
</reference>
<reference key="8">
    <citation type="journal article" date="2003" name="Science">
        <title>Collection, mapping, and annotation of over 28,000 cDNA clones from japonica rice.</title>
        <authorList>
            <consortium name="The rice full-length cDNA consortium"/>
        </authorList>
    </citation>
    <scope>NUCLEOTIDE SEQUENCE [LARGE SCALE MRNA]</scope>
    <source>
        <strain>cv. Nipponbare</strain>
    </source>
</reference>
<reference key="9">
    <citation type="submission" date="2000-05" db="EMBL/GenBank/DDBJ databases">
        <title>Rice shoot phosphate transporter.</title>
        <authorList>
            <person name="Yu F.T."/>
            <person name="Zhang A.M."/>
            <person name="Chen S.Y."/>
            <person name="Zhang F.S."/>
        </authorList>
    </citation>
    <scope>NUCLEOTIDE SEQUENCE [MRNA] OF 31-420</scope>
    <source>
        <strain>cv. Jingxi 17</strain>
        <tissue>Shoot</tissue>
    </source>
</reference>
<reference key="10">
    <citation type="journal article" date="2008" name="Biotechnol. Lett.">
        <title>Increased expression of OsPT1, a high-affinity phosphate transporter, enhances phosphate acquisition in rice.</title>
        <authorList>
            <person name="Seo H.-M."/>
            <person name="Jung Y."/>
            <person name="Song S."/>
            <person name="Kim Y."/>
            <person name="Kwon T."/>
            <person name="Kim D.-H."/>
            <person name="Jeung S.-J."/>
            <person name="Yi Y.-B."/>
            <person name="Yi G."/>
            <person name="Nam M.-H."/>
            <person name="Nam J."/>
        </authorList>
    </citation>
    <scope>INDUCTION</scope>
</reference>
<protein>
    <recommendedName>
        <fullName>Probable inorganic phosphate transporter 1-4</fullName>
        <shortName>OsPT4</shortName>
        <shortName>OsPht1;4</shortName>
    </recommendedName>
    <alternativeName>
        <fullName>H(+)/Pi cotransporter</fullName>
    </alternativeName>
    <alternativeName>
        <fullName>OsPT1</fullName>
    </alternativeName>
</protein>
<comment type="function">
    <text evidence="1">High-affinity transporter for external inorganic phosphate.</text>
</comment>
<comment type="subcellular location">
    <subcellularLocation>
        <location evidence="1">Membrane</location>
        <topology evidence="1">Multi-pass membrane protein</topology>
    </subcellularLocation>
</comment>
<comment type="tissue specificity">
    <text evidence="4">Expressed at low levels in roots.</text>
</comment>
<comment type="induction">
    <text evidence="5">In roots by phosphate starvation.</text>
</comment>
<comment type="miscellaneous">
    <text>Although related to the sugar transporter family, it does not transport sugars.</text>
</comment>
<comment type="similarity">
    <text evidence="6">Belongs to the major facilitator superfamily. Phosphate:H(+) symporter (TC 2.A.1.9) family.</text>
</comment>
<comment type="sequence caution" evidence="6">
    <conflict type="frameshift">
        <sequence resource="EMBL-CDS" id="AAF76345"/>
    </conflict>
</comment>
<name>PHT14_ORYSJ</name>
<gene>
    <name type="primary">PHT1-4</name>
    <name type="synonym">PHT1-2</name>
    <name type="synonym">PT1</name>
    <name type="synonym">PT4</name>
    <name type="ordered locus">Os04g0186400</name>
    <name type="ordered locus">LOC_Os04g10750</name>
    <name type="ORF">OsJ_013378</name>
    <name type="ORF">OSJNBb0003A12.10</name>
</gene>
<accession>Q8H6H2</accession>
<accession>A0A0P0W742</accession>
<accession>Q7XRH9</accession>
<accession>Q9LKL5</accession>
<organism>
    <name type="scientific">Oryza sativa subsp. japonica</name>
    <name type="common">Rice</name>
    <dbReference type="NCBI Taxonomy" id="39947"/>
    <lineage>
        <taxon>Eukaryota</taxon>
        <taxon>Viridiplantae</taxon>
        <taxon>Streptophyta</taxon>
        <taxon>Embryophyta</taxon>
        <taxon>Tracheophyta</taxon>
        <taxon>Spermatophyta</taxon>
        <taxon>Magnoliopsida</taxon>
        <taxon>Liliopsida</taxon>
        <taxon>Poales</taxon>
        <taxon>Poaceae</taxon>
        <taxon>BOP clade</taxon>
        <taxon>Oryzoideae</taxon>
        <taxon>Oryzeae</taxon>
        <taxon>Oryzinae</taxon>
        <taxon>Oryza</taxon>
        <taxon>Oryza sativa</taxon>
    </lineage>
</organism>
<proteinExistence type="evidence at transcript level"/>
<sequence length="538" mass="58826">MAGELKVLNALDSAKTQWYHFTAIVIAGMGFFTDAYDLFSISLVTKLLGRIYYFNPASKSPGSLPPNVSAAVNGVAFCGTLAGQLFFGWLGDKMGRKKVYGMTLMLMVICCLASGLSFGSSAKGVMATLCFFRFWLGFGIGGDYPLSATIMSEYANKRTRGAFIAAVFAMQGFGNLTGGIVAIIVSAAFKSRFDAPAYRDDRTGSTVPQADYAWRIVLMFGAIPALLTYYWRMKMPETARYTALVAKNAKQAAADMTQVLNVEIVEEQEKADEVARREQFGLFSRQFLRRHGRHLLGTTVCWFVLDIAFYSSNLFQKDIYTAVQWLPKADTMSALEEMFKISRAQTLVALCGTIPGYWFTVFFIDIIGRFVIQLGGFFFMTAFMLGLAVPYHHWTTPGNHIGFVVMYAFTFFFANFGPNSTTFIVPAEIFPARLRSTCHGISAAAGKAGAIVGSFGFLYAAQSTDASKTDAGYPPGIGVRNSLFFLAGCNVIGFFFTFLVPESKGKSLEELSGENEDDDDVPEAPATADHRTAPAPPA</sequence>
<feature type="chain" id="PRO_0000365483" description="Probable inorganic phosphate transporter 1-4">
    <location>
        <begin position="1"/>
        <end position="538"/>
    </location>
</feature>
<feature type="topological domain" description="Cytoplasmic" evidence="2">
    <location>
        <begin position="1"/>
        <end position="23"/>
    </location>
</feature>
<feature type="transmembrane region" description="Helical" evidence="2">
    <location>
        <begin position="24"/>
        <end position="44"/>
    </location>
</feature>
<feature type="topological domain" description="Extracellular" evidence="2">
    <location>
        <begin position="45"/>
        <end position="69"/>
    </location>
</feature>
<feature type="transmembrane region" description="Helical" evidence="2">
    <location>
        <begin position="70"/>
        <end position="90"/>
    </location>
</feature>
<feature type="topological domain" description="Cytoplasmic" evidence="2">
    <location>
        <begin position="91"/>
        <end position="98"/>
    </location>
</feature>
<feature type="transmembrane region" description="Helical" evidence="2">
    <location>
        <begin position="99"/>
        <end position="119"/>
    </location>
</feature>
<feature type="topological domain" description="Extracellular" evidence="2">
    <location>
        <begin position="120"/>
        <end position="123"/>
    </location>
</feature>
<feature type="transmembrane region" description="Helical" evidence="2">
    <location>
        <begin position="124"/>
        <end position="144"/>
    </location>
</feature>
<feature type="topological domain" description="Cytoplasmic" evidence="2">
    <location>
        <begin position="145"/>
        <end position="163"/>
    </location>
</feature>
<feature type="transmembrane region" description="Helical" evidence="2">
    <location>
        <begin position="164"/>
        <end position="184"/>
    </location>
</feature>
<feature type="topological domain" description="Extracellular" evidence="2">
    <location>
        <begin position="185"/>
        <end position="210"/>
    </location>
</feature>
<feature type="transmembrane region" description="Helical" evidence="2">
    <location>
        <begin position="211"/>
        <end position="231"/>
    </location>
</feature>
<feature type="topological domain" description="Cytoplasmic" evidence="2">
    <location>
        <begin position="232"/>
        <end position="294"/>
    </location>
</feature>
<feature type="transmembrane region" description="Helical" evidence="2">
    <location>
        <begin position="295"/>
        <end position="315"/>
    </location>
</feature>
<feature type="topological domain" description="Extracellular" evidence="2">
    <location>
        <begin position="316"/>
        <end position="346"/>
    </location>
</feature>
<feature type="transmembrane region" description="Helical" evidence="2">
    <location>
        <begin position="347"/>
        <end position="367"/>
    </location>
</feature>
<feature type="topological domain" description="Cytoplasmic" evidence="2">
    <location>
        <begin position="368"/>
        <end position="369"/>
    </location>
</feature>
<feature type="transmembrane region" description="Helical" evidence="2">
    <location>
        <begin position="370"/>
        <end position="390"/>
    </location>
</feature>
<feature type="topological domain" description="Extracellular" evidence="2">
    <location>
        <begin position="391"/>
        <end position="396"/>
    </location>
</feature>
<feature type="transmembrane region" description="Helical" evidence="2">
    <location>
        <begin position="397"/>
        <end position="417"/>
    </location>
</feature>
<feature type="topological domain" description="Cytoplasmic" evidence="2">
    <location>
        <begin position="418"/>
        <end position="440"/>
    </location>
</feature>
<feature type="transmembrane region" description="Helical" evidence="2">
    <location>
        <begin position="441"/>
        <end position="461"/>
    </location>
</feature>
<feature type="topological domain" description="Extracellular" evidence="2">
    <location>
        <begin position="462"/>
        <end position="481"/>
    </location>
</feature>
<feature type="transmembrane region" description="Helical" evidence="2">
    <location>
        <begin position="482"/>
        <end position="502"/>
    </location>
</feature>
<feature type="topological domain" description="Cytoplasmic" evidence="2">
    <location>
        <begin position="503"/>
        <end position="538"/>
    </location>
</feature>
<feature type="region of interest" description="Disordered" evidence="3">
    <location>
        <begin position="507"/>
        <end position="538"/>
    </location>
</feature>
<feature type="compositionally biased region" description="Acidic residues" evidence="3">
    <location>
        <begin position="511"/>
        <end position="522"/>
    </location>
</feature>
<feature type="sequence conflict" description="In Ref. 8; AAF76345." evidence="6" ref="8">
    <original>E</original>
    <variation>N</variation>
    <location>
        <position position="269"/>
    </location>
</feature>
<feature type="sequence conflict" description="In Ref. 8; AAF76345." evidence="6" ref="8">
    <original>S</original>
    <variation>A</variation>
    <location>
        <position position="420"/>
    </location>
</feature>
<dbReference type="EMBL" id="AF536964">
    <property type="protein sequence ID" value="AAN39045.1"/>
    <property type="molecule type" value="Genomic_DNA"/>
</dbReference>
<dbReference type="EMBL" id="AY569609">
    <property type="protein sequence ID" value="AAU84428.1"/>
    <property type="molecule type" value="mRNA"/>
</dbReference>
<dbReference type="EMBL" id="AL731620">
    <property type="protein sequence ID" value="CAE02523.2"/>
    <property type="molecule type" value="Genomic_DNA"/>
</dbReference>
<dbReference type="EMBL" id="AP008210">
    <property type="protein sequence ID" value="BAF14108.1"/>
    <property type="molecule type" value="Genomic_DNA"/>
</dbReference>
<dbReference type="EMBL" id="AP014960">
    <property type="protein sequence ID" value="BAS87998.1"/>
    <property type="molecule type" value="Genomic_DNA"/>
</dbReference>
<dbReference type="EMBL" id="CM000141">
    <property type="protein sequence ID" value="EAZ29895.1"/>
    <property type="molecule type" value="Genomic_DNA"/>
</dbReference>
<dbReference type="EMBL" id="AK063990">
    <property type="protein sequence ID" value="BAG88949.1"/>
    <property type="molecule type" value="mRNA"/>
</dbReference>
<dbReference type="EMBL" id="AK101380">
    <property type="protein sequence ID" value="BAG95035.1"/>
    <property type="molecule type" value="mRNA"/>
</dbReference>
<dbReference type="EMBL" id="AF271893">
    <property type="protein sequence ID" value="AAF76345.1"/>
    <property type="status" value="ALT_FRAME"/>
    <property type="molecule type" value="mRNA"/>
</dbReference>
<dbReference type="RefSeq" id="XP_015636813.1">
    <property type="nucleotide sequence ID" value="XM_015781327.1"/>
</dbReference>
<dbReference type="RefSeq" id="XP_015636814.1">
    <property type="nucleotide sequence ID" value="XM_015781328.1"/>
</dbReference>
<dbReference type="RefSeq" id="XP_015636815.1">
    <property type="nucleotide sequence ID" value="XM_015781329.1"/>
</dbReference>
<dbReference type="RefSeq" id="XP_015636816.1">
    <property type="nucleotide sequence ID" value="XM_015781330.1"/>
</dbReference>
<dbReference type="RefSeq" id="XP_015636817.1">
    <property type="nucleotide sequence ID" value="XM_015781331.1"/>
</dbReference>
<dbReference type="SMR" id="Q8H6H2"/>
<dbReference type="FunCoup" id="Q8H6H2">
    <property type="interactions" value="354"/>
</dbReference>
<dbReference type="STRING" id="39947.Q8H6H2"/>
<dbReference type="PaxDb" id="39947-Q8H6H2"/>
<dbReference type="EnsemblPlants" id="Os04t0186400-01">
    <property type="protein sequence ID" value="Os04t0186400-01"/>
    <property type="gene ID" value="Os04g0186400"/>
</dbReference>
<dbReference type="EnsemblPlants" id="Os04t0186400-02">
    <property type="protein sequence ID" value="Os04t0186400-02"/>
    <property type="gene ID" value="Os04g0186400"/>
</dbReference>
<dbReference type="GeneID" id="4335115"/>
<dbReference type="Gramene" id="Os04t0186400-01">
    <property type="protein sequence ID" value="Os04t0186400-01"/>
    <property type="gene ID" value="Os04g0186400"/>
</dbReference>
<dbReference type="Gramene" id="Os04t0186400-02">
    <property type="protein sequence ID" value="Os04t0186400-02"/>
    <property type="gene ID" value="Os04g0186400"/>
</dbReference>
<dbReference type="KEGG" id="dosa:Os04g0186400"/>
<dbReference type="KEGG" id="osa:4335115"/>
<dbReference type="eggNOG" id="KOG0252">
    <property type="taxonomic scope" value="Eukaryota"/>
</dbReference>
<dbReference type="HOGENOM" id="CLU_001265_46_14_1"/>
<dbReference type="InParanoid" id="Q8H6H2"/>
<dbReference type="OMA" id="TAQMGEF"/>
<dbReference type="OrthoDB" id="433512at2759"/>
<dbReference type="PlantReactome" id="R-OSA-9618218">
    <property type="pathway name" value="Arsenic uptake and detoxification"/>
</dbReference>
<dbReference type="PlantReactome" id="R-OSA-9631623">
    <property type="pathway name" value="Regulation of embryo development"/>
</dbReference>
<dbReference type="Proteomes" id="UP000000763">
    <property type="component" value="Chromosome 4"/>
</dbReference>
<dbReference type="Proteomes" id="UP000007752">
    <property type="component" value="Chromosome 4"/>
</dbReference>
<dbReference type="Proteomes" id="UP000059680">
    <property type="component" value="Chromosome 4"/>
</dbReference>
<dbReference type="GO" id="GO:0016020">
    <property type="term" value="C:membrane"/>
    <property type="evidence" value="ECO:0007669"/>
    <property type="project" value="UniProtKB-SubCell"/>
</dbReference>
<dbReference type="GO" id="GO:0005315">
    <property type="term" value="F:phosphate transmembrane transporter activity"/>
    <property type="evidence" value="ECO:0007669"/>
    <property type="project" value="InterPro"/>
</dbReference>
<dbReference type="GO" id="GO:0015293">
    <property type="term" value="F:symporter activity"/>
    <property type="evidence" value="ECO:0007669"/>
    <property type="project" value="UniProtKB-KW"/>
</dbReference>
<dbReference type="GO" id="GO:0006817">
    <property type="term" value="P:phosphate ion transport"/>
    <property type="evidence" value="ECO:0007669"/>
    <property type="project" value="UniProtKB-KW"/>
</dbReference>
<dbReference type="CDD" id="cd17364">
    <property type="entry name" value="MFS_PhT"/>
    <property type="match status" value="1"/>
</dbReference>
<dbReference type="FunFam" id="1.20.1250.20:FF:000175">
    <property type="entry name" value="Inorganic phosphate transporter 1-6"/>
    <property type="match status" value="1"/>
</dbReference>
<dbReference type="Gene3D" id="1.20.1250.20">
    <property type="entry name" value="MFS general substrate transporter like domains"/>
    <property type="match status" value="2"/>
</dbReference>
<dbReference type="InterPro" id="IPR020846">
    <property type="entry name" value="MFS_dom"/>
</dbReference>
<dbReference type="InterPro" id="IPR005828">
    <property type="entry name" value="MFS_sugar_transport-like"/>
</dbReference>
<dbReference type="InterPro" id="IPR036259">
    <property type="entry name" value="MFS_trans_sf"/>
</dbReference>
<dbReference type="InterPro" id="IPR004738">
    <property type="entry name" value="Phos_permease"/>
</dbReference>
<dbReference type="NCBIfam" id="TIGR00887">
    <property type="entry name" value="2A0109"/>
    <property type="match status" value="1"/>
</dbReference>
<dbReference type="PANTHER" id="PTHR24064">
    <property type="entry name" value="SOLUTE CARRIER FAMILY 22 MEMBER"/>
    <property type="match status" value="1"/>
</dbReference>
<dbReference type="Pfam" id="PF00083">
    <property type="entry name" value="Sugar_tr"/>
    <property type="match status" value="1"/>
</dbReference>
<dbReference type="SUPFAM" id="SSF103473">
    <property type="entry name" value="MFS general substrate transporter"/>
    <property type="match status" value="1"/>
</dbReference>
<dbReference type="PROSITE" id="PS50850">
    <property type="entry name" value="MFS"/>
    <property type="match status" value="1"/>
</dbReference>
<keyword id="KW-0472">Membrane</keyword>
<keyword id="KW-0592">Phosphate transport</keyword>
<keyword id="KW-1185">Reference proteome</keyword>
<keyword id="KW-0769">Symport</keyword>
<keyword id="KW-0812">Transmembrane</keyword>
<keyword id="KW-1133">Transmembrane helix</keyword>
<keyword id="KW-0813">Transport</keyword>
<evidence type="ECO:0000250" key="1"/>
<evidence type="ECO:0000255" key="2"/>
<evidence type="ECO:0000256" key="3">
    <source>
        <dbReference type="SAM" id="MobiDB-lite"/>
    </source>
</evidence>
<evidence type="ECO:0000269" key="4">
    <source>
    </source>
</evidence>
<evidence type="ECO:0000269" key="5">
    <source>
    </source>
</evidence>
<evidence type="ECO:0000305" key="6"/>